<proteinExistence type="inferred from homology"/>
<comment type="function">
    <text evidence="1">An aminoacyl-tRNA editing enzyme that deacylates mischarged D-aminoacyl-tRNAs. Also deacylates mischarged glycyl-tRNA(Ala), protecting cells against glycine mischarging by AlaRS. Acts via tRNA-based rather than protein-based catalysis; rejects L-amino acids rather than detecting D-amino acids in the active site. By recycling D-aminoacyl-tRNA to D-amino acids and free tRNA molecules, this enzyme counteracts the toxicity associated with the formation of D-aminoacyl-tRNA entities in vivo and helps enforce protein L-homochirality.</text>
</comment>
<comment type="catalytic activity">
    <reaction evidence="1">
        <text>glycyl-tRNA(Ala) + H2O = tRNA(Ala) + glycine + H(+)</text>
        <dbReference type="Rhea" id="RHEA:53744"/>
        <dbReference type="Rhea" id="RHEA-COMP:9657"/>
        <dbReference type="Rhea" id="RHEA-COMP:13640"/>
        <dbReference type="ChEBI" id="CHEBI:15377"/>
        <dbReference type="ChEBI" id="CHEBI:15378"/>
        <dbReference type="ChEBI" id="CHEBI:57305"/>
        <dbReference type="ChEBI" id="CHEBI:78442"/>
        <dbReference type="ChEBI" id="CHEBI:78522"/>
        <dbReference type="EC" id="3.1.1.96"/>
    </reaction>
</comment>
<comment type="catalytic activity">
    <reaction evidence="1">
        <text>a D-aminoacyl-tRNA + H2O = a tRNA + a D-alpha-amino acid + H(+)</text>
        <dbReference type="Rhea" id="RHEA:13953"/>
        <dbReference type="Rhea" id="RHEA-COMP:10123"/>
        <dbReference type="Rhea" id="RHEA-COMP:10124"/>
        <dbReference type="ChEBI" id="CHEBI:15377"/>
        <dbReference type="ChEBI" id="CHEBI:15378"/>
        <dbReference type="ChEBI" id="CHEBI:59871"/>
        <dbReference type="ChEBI" id="CHEBI:78442"/>
        <dbReference type="ChEBI" id="CHEBI:79333"/>
        <dbReference type="EC" id="3.1.1.96"/>
    </reaction>
</comment>
<comment type="subunit">
    <text evidence="1">Homodimer.</text>
</comment>
<comment type="subcellular location">
    <subcellularLocation>
        <location evidence="1">Cytoplasm</location>
    </subcellularLocation>
</comment>
<comment type="domain">
    <text evidence="1">A Gly-cisPro motif from one monomer fits into the active site of the other monomer to allow specific chiral rejection of L-amino acids.</text>
</comment>
<comment type="similarity">
    <text evidence="1">Belongs to the DTD family.</text>
</comment>
<comment type="sequence caution" evidence="2">
    <conflict type="erroneous initiation">
        <sequence resource="EMBL-CDS" id="AAL94553"/>
    </conflict>
    <text>Extended N-terminus.</text>
</comment>
<accession>Q8RGF0</accession>
<name>DTD_FUSNN</name>
<reference key="1">
    <citation type="journal article" date="2002" name="J. Bacteriol.">
        <title>Genome sequence and analysis of the oral bacterium Fusobacterium nucleatum strain ATCC 25586.</title>
        <authorList>
            <person name="Kapatral V."/>
            <person name="Anderson I."/>
            <person name="Ivanova N."/>
            <person name="Reznik G."/>
            <person name="Los T."/>
            <person name="Lykidis A."/>
            <person name="Bhattacharyya A."/>
            <person name="Bartman A."/>
            <person name="Gardner W."/>
            <person name="Grechkin G."/>
            <person name="Zhu L."/>
            <person name="Vasieva O."/>
            <person name="Chu L."/>
            <person name="Kogan Y."/>
            <person name="Chaga O."/>
            <person name="Goltsman E."/>
            <person name="Bernal A."/>
            <person name="Larsen N."/>
            <person name="D'Souza M."/>
            <person name="Walunas T."/>
            <person name="Pusch G."/>
            <person name="Haselkorn R."/>
            <person name="Fonstein M."/>
            <person name="Kyrpides N.C."/>
            <person name="Overbeek R."/>
        </authorList>
    </citation>
    <scope>NUCLEOTIDE SEQUENCE [LARGE SCALE GENOMIC DNA]</scope>
    <source>
        <strain>ATCC 25586 / DSM 15643 / BCRC 10681 / CIP 101130 / JCM 8532 / KCTC 2640 / LMG 13131 / VPI 4355</strain>
    </source>
</reference>
<evidence type="ECO:0000255" key="1">
    <source>
        <dbReference type="HAMAP-Rule" id="MF_00518"/>
    </source>
</evidence>
<evidence type="ECO:0000305" key="2"/>
<keyword id="KW-0963">Cytoplasm</keyword>
<keyword id="KW-0378">Hydrolase</keyword>
<keyword id="KW-1185">Reference proteome</keyword>
<keyword id="KW-0694">RNA-binding</keyword>
<keyword id="KW-0820">tRNA-binding</keyword>
<gene>
    <name evidence="1" type="primary">dtd</name>
    <name type="ordered locus">FN0349</name>
</gene>
<protein>
    <recommendedName>
        <fullName evidence="1">D-aminoacyl-tRNA deacylase</fullName>
        <shortName evidence="1">DTD</shortName>
        <ecNumber evidence="1">3.1.1.96</ecNumber>
    </recommendedName>
    <alternativeName>
        <fullName evidence="1">Gly-tRNA(Ala) deacylase</fullName>
    </alternativeName>
</protein>
<sequence length="151" mass="17056">MRTVIQRVKYAKVSVDGKILGEINKGLLVLLGITHEDSIKEVKWLVNKTKNLRIFEDEEEKMNLSLEDVKGKALIISQFTLYGNSIKGNRPSFIDAAKPDLAKDLYLKFIEELKSFDIETQEGEFGADMKVELLNDGPVTIIIDTKDANIK</sequence>
<organism>
    <name type="scientific">Fusobacterium nucleatum subsp. nucleatum (strain ATCC 25586 / DSM 15643 / BCRC 10681 / CIP 101130 / JCM 8532 / KCTC 2640 / LMG 13131 / VPI 4355)</name>
    <dbReference type="NCBI Taxonomy" id="190304"/>
    <lineage>
        <taxon>Bacteria</taxon>
        <taxon>Fusobacteriati</taxon>
        <taxon>Fusobacteriota</taxon>
        <taxon>Fusobacteriia</taxon>
        <taxon>Fusobacteriales</taxon>
        <taxon>Fusobacteriaceae</taxon>
        <taxon>Fusobacterium</taxon>
    </lineage>
</organism>
<feature type="chain" id="PRO_0000164542" description="D-aminoacyl-tRNA deacylase">
    <location>
        <begin position="1"/>
        <end position="151"/>
    </location>
</feature>
<feature type="short sequence motif" description="Gly-cisPro motif, important for rejection of L-amino acids" evidence="1">
    <location>
        <begin position="137"/>
        <end position="138"/>
    </location>
</feature>
<dbReference type="EC" id="3.1.1.96" evidence="1"/>
<dbReference type="EMBL" id="AE009951">
    <property type="protein sequence ID" value="AAL94553.1"/>
    <property type="status" value="ALT_INIT"/>
    <property type="molecule type" value="Genomic_DNA"/>
</dbReference>
<dbReference type="RefSeq" id="NP_603254.1">
    <property type="nucleotide sequence ID" value="NC_003454.1"/>
</dbReference>
<dbReference type="RefSeq" id="WP_147373094.1">
    <property type="nucleotide sequence ID" value="NZ_CP028101.1"/>
</dbReference>
<dbReference type="SMR" id="Q8RGF0"/>
<dbReference type="FunCoup" id="Q8RGF0">
    <property type="interactions" value="285"/>
</dbReference>
<dbReference type="STRING" id="190304.FN0349"/>
<dbReference type="PaxDb" id="190304-FN0349"/>
<dbReference type="EnsemblBacteria" id="AAL94553">
    <property type="protein sequence ID" value="AAL94553"/>
    <property type="gene ID" value="FN0349"/>
</dbReference>
<dbReference type="GeneID" id="79783358"/>
<dbReference type="KEGG" id="fnu:FN0349"/>
<dbReference type="PATRIC" id="fig|190304.8.peg.927"/>
<dbReference type="eggNOG" id="COG1490">
    <property type="taxonomic scope" value="Bacteria"/>
</dbReference>
<dbReference type="HOGENOM" id="CLU_076901_1_0_0"/>
<dbReference type="InParanoid" id="Q8RGF0"/>
<dbReference type="Proteomes" id="UP000002521">
    <property type="component" value="Chromosome"/>
</dbReference>
<dbReference type="GO" id="GO:0005737">
    <property type="term" value="C:cytoplasm"/>
    <property type="evidence" value="ECO:0000318"/>
    <property type="project" value="GO_Central"/>
</dbReference>
<dbReference type="GO" id="GO:0051500">
    <property type="term" value="F:D-tyrosyl-tRNA(Tyr) deacylase activity"/>
    <property type="evidence" value="ECO:0000318"/>
    <property type="project" value="GO_Central"/>
</dbReference>
<dbReference type="GO" id="GO:0106026">
    <property type="term" value="F:Gly-tRNA(Ala) deacylase activity"/>
    <property type="evidence" value="ECO:0007669"/>
    <property type="project" value="UniProtKB-UniRule"/>
</dbReference>
<dbReference type="GO" id="GO:0043908">
    <property type="term" value="F:Ser(Gly)-tRNA(Ala) hydrolase activity"/>
    <property type="evidence" value="ECO:0007669"/>
    <property type="project" value="UniProtKB-UniRule"/>
</dbReference>
<dbReference type="GO" id="GO:0000049">
    <property type="term" value="F:tRNA binding"/>
    <property type="evidence" value="ECO:0007669"/>
    <property type="project" value="UniProtKB-UniRule"/>
</dbReference>
<dbReference type="GO" id="GO:0019478">
    <property type="term" value="P:D-amino acid catabolic process"/>
    <property type="evidence" value="ECO:0007669"/>
    <property type="project" value="UniProtKB-UniRule"/>
</dbReference>
<dbReference type="GO" id="GO:0006399">
    <property type="term" value="P:tRNA metabolic process"/>
    <property type="evidence" value="ECO:0000318"/>
    <property type="project" value="GO_Central"/>
</dbReference>
<dbReference type="CDD" id="cd00563">
    <property type="entry name" value="Dtyr_deacylase"/>
    <property type="match status" value="1"/>
</dbReference>
<dbReference type="FunFam" id="3.50.80.10:FF:000001">
    <property type="entry name" value="D-aminoacyl-tRNA deacylase"/>
    <property type="match status" value="1"/>
</dbReference>
<dbReference type="Gene3D" id="3.50.80.10">
    <property type="entry name" value="D-tyrosyl-tRNA(Tyr) deacylase"/>
    <property type="match status" value="1"/>
</dbReference>
<dbReference type="HAMAP" id="MF_00518">
    <property type="entry name" value="Deacylase_Dtd"/>
    <property type="match status" value="1"/>
</dbReference>
<dbReference type="InterPro" id="IPR003732">
    <property type="entry name" value="Daa-tRNA_deacyls_DTD"/>
</dbReference>
<dbReference type="InterPro" id="IPR023509">
    <property type="entry name" value="DTD-like_sf"/>
</dbReference>
<dbReference type="NCBIfam" id="TIGR00256">
    <property type="entry name" value="D-aminoacyl-tRNA deacylase"/>
    <property type="match status" value="1"/>
</dbReference>
<dbReference type="PANTHER" id="PTHR10472:SF5">
    <property type="entry name" value="D-AMINOACYL-TRNA DEACYLASE 1"/>
    <property type="match status" value="1"/>
</dbReference>
<dbReference type="PANTHER" id="PTHR10472">
    <property type="entry name" value="D-TYROSYL-TRNA TYR DEACYLASE"/>
    <property type="match status" value="1"/>
</dbReference>
<dbReference type="Pfam" id="PF02580">
    <property type="entry name" value="Tyr_Deacylase"/>
    <property type="match status" value="1"/>
</dbReference>
<dbReference type="SUPFAM" id="SSF69500">
    <property type="entry name" value="DTD-like"/>
    <property type="match status" value="1"/>
</dbReference>